<keyword id="KW-0001">2Fe-2S</keyword>
<keyword id="KW-0238">DNA-binding</keyword>
<keyword id="KW-0408">Iron</keyword>
<keyword id="KW-0411">Iron-sulfur</keyword>
<keyword id="KW-0479">Metal-binding</keyword>
<keyword id="KW-1185">Reference proteome</keyword>
<keyword id="KW-0678">Repressor</keyword>
<keyword id="KW-0804">Transcription</keyword>
<keyword id="KW-0805">Transcription regulation</keyword>
<reference key="1">
    <citation type="journal article" date="2005" name="Science">
        <title>Life at depth: Photobacterium profundum genome sequence and expression analysis.</title>
        <authorList>
            <person name="Vezzi A."/>
            <person name="Campanaro S."/>
            <person name="D'Angelo M."/>
            <person name="Simonato F."/>
            <person name="Vitulo N."/>
            <person name="Lauro F.M."/>
            <person name="Cestaro A."/>
            <person name="Malacrida G."/>
            <person name="Simionati B."/>
            <person name="Cannata N."/>
            <person name="Romualdi C."/>
            <person name="Bartlett D.H."/>
            <person name="Valle G."/>
        </authorList>
    </citation>
    <scope>NUCLEOTIDE SEQUENCE [LARGE SCALE GENOMIC DNA]</scope>
    <source>
        <strain>ATCC BAA-1253 / SS9</strain>
    </source>
</reference>
<protein>
    <recommendedName>
        <fullName evidence="1">HTH-type transcriptional repressor NsrR</fullName>
    </recommendedName>
</protein>
<feature type="chain" id="PRO_0000268942" description="HTH-type transcriptional repressor NsrR">
    <location>
        <begin position="1"/>
        <end position="144"/>
    </location>
</feature>
<feature type="domain" description="HTH rrf2-type" evidence="1">
    <location>
        <begin position="2"/>
        <end position="129"/>
    </location>
</feature>
<feature type="DNA-binding region" description="H-T-H motif" evidence="1">
    <location>
        <begin position="28"/>
        <end position="51"/>
    </location>
</feature>
<feature type="binding site" evidence="1">
    <location>
        <position position="91"/>
    </location>
    <ligand>
        <name>[2Fe-2S] cluster</name>
        <dbReference type="ChEBI" id="CHEBI:190135"/>
    </ligand>
</feature>
<feature type="binding site" evidence="1">
    <location>
        <position position="96"/>
    </location>
    <ligand>
        <name>[2Fe-2S] cluster</name>
        <dbReference type="ChEBI" id="CHEBI:190135"/>
    </ligand>
</feature>
<feature type="binding site" evidence="1">
    <location>
        <position position="102"/>
    </location>
    <ligand>
        <name>[2Fe-2S] cluster</name>
        <dbReference type="ChEBI" id="CHEBI:190135"/>
    </ligand>
</feature>
<evidence type="ECO:0000255" key="1">
    <source>
        <dbReference type="HAMAP-Rule" id="MF_01177"/>
    </source>
</evidence>
<evidence type="ECO:0000305" key="2"/>
<accession>Q6LM38</accession>
<comment type="function">
    <text evidence="1">Nitric oxide-sensitive repressor of genes involved in protecting the cell against nitrosative stress. May require iron for activity.</text>
</comment>
<comment type="cofactor">
    <cofactor evidence="1">
        <name>[2Fe-2S] cluster</name>
        <dbReference type="ChEBI" id="CHEBI:190135"/>
    </cofactor>
    <text evidence="1">Binds 1 [2Fe-2S] cluster per subunit.</text>
</comment>
<comment type="sequence caution" evidence="2">
    <conflict type="erroneous initiation">
        <sequence resource="EMBL-CDS" id="CAG21640"/>
    </conflict>
</comment>
<proteinExistence type="inferred from homology"/>
<dbReference type="EMBL" id="CR378673">
    <property type="protein sequence ID" value="CAG21640.1"/>
    <property type="status" value="ALT_INIT"/>
    <property type="molecule type" value="Genomic_DNA"/>
</dbReference>
<dbReference type="RefSeq" id="WP_006233803.1">
    <property type="nucleotide sequence ID" value="NC_006370.1"/>
</dbReference>
<dbReference type="SMR" id="Q6LM38"/>
<dbReference type="STRING" id="298386.PBPRA3342"/>
<dbReference type="KEGG" id="ppr:PBPRA3342"/>
<dbReference type="eggNOG" id="COG1959">
    <property type="taxonomic scope" value="Bacteria"/>
</dbReference>
<dbReference type="HOGENOM" id="CLU_107144_2_1_6"/>
<dbReference type="Proteomes" id="UP000000593">
    <property type="component" value="Chromosome 1"/>
</dbReference>
<dbReference type="GO" id="GO:0005829">
    <property type="term" value="C:cytosol"/>
    <property type="evidence" value="ECO:0007669"/>
    <property type="project" value="TreeGrafter"/>
</dbReference>
<dbReference type="GO" id="GO:0051537">
    <property type="term" value="F:2 iron, 2 sulfur cluster binding"/>
    <property type="evidence" value="ECO:0007669"/>
    <property type="project" value="UniProtKB-KW"/>
</dbReference>
<dbReference type="GO" id="GO:0003700">
    <property type="term" value="F:DNA-binding transcription factor activity"/>
    <property type="evidence" value="ECO:0007669"/>
    <property type="project" value="UniProtKB-UniRule"/>
</dbReference>
<dbReference type="GO" id="GO:0003690">
    <property type="term" value="F:double-stranded DNA binding"/>
    <property type="evidence" value="ECO:0007669"/>
    <property type="project" value="UniProtKB-UniRule"/>
</dbReference>
<dbReference type="GO" id="GO:0005506">
    <property type="term" value="F:iron ion binding"/>
    <property type="evidence" value="ECO:0007669"/>
    <property type="project" value="UniProtKB-UniRule"/>
</dbReference>
<dbReference type="GO" id="GO:0045892">
    <property type="term" value="P:negative regulation of DNA-templated transcription"/>
    <property type="evidence" value="ECO:0007669"/>
    <property type="project" value="InterPro"/>
</dbReference>
<dbReference type="FunFam" id="1.10.10.10:FF:000105">
    <property type="entry name" value="HTH-type transcriptional repressor NsrR"/>
    <property type="match status" value="1"/>
</dbReference>
<dbReference type="Gene3D" id="1.10.10.10">
    <property type="entry name" value="Winged helix-like DNA-binding domain superfamily/Winged helix DNA-binding domain"/>
    <property type="match status" value="1"/>
</dbReference>
<dbReference type="HAMAP" id="MF_01177">
    <property type="entry name" value="HTH_type_NsrR"/>
    <property type="match status" value="1"/>
</dbReference>
<dbReference type="InterPro" id="IPR030489">
    <property type="entry name" value="TR_Rrf2-type_CS"/>
</dbReference>
<dbReference type="InterPro" id="IPR000944">
    <property type="entry name" value="Tscrpt_reg_Rrf2"/>
</dbReference>
<dbReference type="InterPro" id="IPR023761">
    <property type="entry name" value="Tscrpt_rep_HTH_NsrR"/>
</dbReference>
<dbReference type="InterPro" id="IPR036388">
    <property type="entry name" value="WH-like_DNA-bd_sf"/>
</dbReference>
<dbReference type="InterPro" id="IPR036390">
    <property type="entry name" value="WH_DNA-bd_sf"/>
</dbReference>
<dbReference type="NCBIfam" id="NF008240">
    <property type="entry name" value="PRK11014.1"/>
    <property type="match status" value="1"/>
</dbReference>
<dbReference type="NCBIfam" id="TIGR00738">
    <property type="entry name" value="rrf2_super"/>
    <property type="match status" value="1"/>
</dbReference>
<dbReference type="PANTHER" id="PTHR33221:SF4">
    <property type="entry name" value="HTH-TYPE TRANSCRIPTIONAL REPRESSOR NSRR"/>
    <property type="match status" value="1"/>
</dbReference>
<dbReference type="PANTHER" id="PTHR33221">
    <property type="entry name" value="WINGED HELIX-TURN-HELIX TRANSCRIPTIONAL REGULATOR, RRF2 FAMILY"/>
    <property type="match status" value="1"/>
</dbReference>
<dbReference type="Pfam" id="PF02082">
    <property type="entry name" value="Rrf2"/>
    <property type="match status" value="1"/>
</dbReference>
<dbReference type="SUPFAM" id="SSF46785">
    <property type="entry name" value="Winged helix' DNA-binding domain"/>
    <property type="match status" value="1"/>
</dbReference>
<dbReference type="PROSITE" id="PS01332">
    <property type="entry name" value="HTH_RRF2_1"/>
    <property type="match status" value="1"/>
</dbReference>
<dbReference type="PROSITE" id="PS51197">
    <property type="entry name" value="HTH_RRF2_2"/>
    <property type="match status" value="1"/>
</dbReference>
<name>NSRR_PHOPR</name>
<gene>
    <name evidence="1" type="primary">nsrR</name>
    <name type="ordered locus">PBPRA3342</name>
</gene>
<sequence length="144" mass="15745">MQLTSFTDYGLRALIYLATLPEGELTSISKVTEVYGVSRNHMVKIINKLGQLGYVDTVRGKNGGIRLGMPANRIILGDVVRATEPLQIVNCSEDFCHITPACQLKGILASARSAFLAELDKHTLLSLIDNNPPLLVLLDRPVTE</sequence>
<organism>
    <name type="scientific">Photobacterium profundum (strain SS9)</name>
    <dbReference type="NCBI Taxonomy" id="298386"/>
    <lineage>
        <taxon>Bacteria</taxon>
        <taxon>Pseudomonadati</taxon>
        <taxon>Pseudomonadota</taxon>
        <taxon>Gammaproteobacteria</taxon>
        <taxon>Vibrionales</taxon>
        <taxon>Vibrionaceae</taxon>
        <taxon>Photobacterium</taxon>
    </lineage>
</organism>